<comment type="catalytic activity">
    <reaction evidence="1">
        <text>D-threo-isocitrate = glyoxylate + succinate</text>
        <dbReference type="Rhea" id="RHEA:13245"/>
        <dbReference type="ChEBI" id="CHEBI:15562"/>
        <dbReference type="ChEBI" id="CHEBI:30031"/>
        <dbReference type="ChEBI" id="CHEBI:36655"/>
        <dbReference type="EC" id="4.1.3.1"/>
    </reaction>
</comment>
<comment type="catalytic activity">
    <reaction>
        <text>glyoxylate + acetyl-CoA + H2O = (S)-malate + CoA + H(+)</text>
        <dbReference type="Rhea" id="RHEA:18181"/>
        <dbReference type="ChEBI" id="CHEBI:15377"/>
        <dbReference type="ChEBI" id="CHEBI:15378"/>
        <dbReference type="ChEBI" id="CHEBI:15589"/>
        <dbReference type="ChEBI" id="CHEBI:36655"/>
        <dbReference type="ChEBI" id="CHEBI:57287"/>
        <dbReference type="ChEBI" id="CHEBI:57288"/>
        <dbReference type="EC" id="2.3.3.9"/>
    </reaction>
</comment>
<comment type="pathway">
    <text>Carbohydrate metabolism; glyoxylate cycle; (S)-malate from isocitrate: step 1/2.</text>
</comment>
<comment type="pathway">
    <text>Carbohydrate metabolism; glyoxylate cycle; (S)-malate from isocitrate: step 2/2.</text>
</comment>
<comment type="alternative products">
    <event type="alternative splicing"/>
    <isoform>
        <id>Q10663-1</id>
        <name>a</name>
        <sequence type="displayed"/>
    </isoform>
    <isoform>
        <id>Q10663-2</id>
        <name>b</name>
        <sequence type="described" ref="VSP_056035 VSP_056036"/>
    </isoform>
</comment>
<comment type="tissue specificity">
    <text>Intestinal and body wall muscle cells.</text>
</comment>
<comment type="developmental stage">
    <text evidence="2 3">First detected early in the generation of the clonal E cell lineage that is committed to intestinal development and then increases to maximal levels in actively differentiating intestinal and body wall muscle cells. Highest activity in embryos and falls dramatically during L1 larval development (PubMed:7781887). Expression is highest in L3 larval stage with low levels at other stages (PubMed:21884719).</text>
</comment>
<comment type="similarity">
    <text evidence="4">In the N-terminal section; belongs to the isocitrate lyase/PEP mutase superfamily. Isocitrate lyase family.</text>
</comment>
<comment type="similarity">
    <text evidence="4">In the C-terminal section; belongs to the malate synthase family.</text>
</comment>
<comment type="sequence caution" evidence="4">
    <conflict type="miscellaneous discrepancy">
        <sequence resource="EMBL-CDS" id="AAA85857"/>
    </conflict>
    <text>Chimeric cDNA.</text>
</comment>
<sequence length="968" mass="108629">MSSAAKNFYQVVKSAPKGRFKGIKRDYTVEDVLKLRGSIDIDYTLATRGANKLWQLLHTEPFVPALGAQTGNQAVQMVRAGLKAIYLSGWQVAADANSAGDMYPDQSLYPANSGPELAKRINRSLRRADQIEACEAEDYLAQRDWYAPIVADAEAGFGGALNCFELMKAYIEAGAAGVHYEDQLGSEKKCGHMGGKVLIPTAQHIRHLNASRLAADVCGVPTIIVARTDAESSRLLTSDIDPRDHPYIDYEAGRTIEGFYRLKDSTAIQYCIDRAIQYAPYTDLIWMETSHPTIADAREFAEGVHKQYPDKMFAYNCSPSFNWKKHLSPSQMEKFQKELGAMGFKYQFITLAGYHANSYSMFDLARNYKEKGMLAYSGLQEGEFAAEKHGYTAVKHQREVGTGYFDAVSRAVTGGLSSTTALSGSTEEAQFQTAVASQDEEILSLTAQNVAGDEKILTPDALRFLHDLNTEFNPRRLRLLSKRNQVQADINNSLWFPDFNKETEVLRSDQGWKGAEIPRDLQDRRVEITGPTDRKMVINAMNSGANVFMADFEDSNSPTWRNQLEGQINLYDAVRNNISYTHPTTKKEYTLNEKHAVLKVRPRGWHLPEKHVLIHNQPTSGSLFDFGLFVFHNAKALIAQGSGPYFYLPKLQSAEEAQLWADVFKYTEDKLGLARGTIKCTVLIEHLLASFQLHEIIHALKDNIVGLNCGRWDYIFSYIKTFQNHRKFLLPDRFQIGMTAPFMRNYSLEVIKACHLRGIHAMGGMAAQIPIKHDQVANDKAFALVRADKEREATDGHDGTWVAHPGLVPLAKRVFDQMMPKPNQISKNLTRANCTKEDLTVIPEGTRTEAGFRHNISVTLGYLDSWLRGTGCVPLYNLMEDAATAEISRAQLWQWLHHDAKLEDGRTIDAGLVKQTIAAETERRLIRAGSVVNRIPEAADLLEKFVTEEKMSDFLTTDAYDRLVSEGY</sequence>
<keyword id="KW-0025">Alternative splicing</keyword>
<keyword id="KW-0903">Direct protein sequencing</keyword>
<keyword id="KW-0329">Glyoxylate bypass</keyword>
<keyword id="KW-0456">Lyase</keyword>
<keyword id="KW-0511">Multifunctional enzyme</keyword>
<keyword id="KW-1185">Reference proteome</keyword>
<keyword id="KW-0808">Transferase</keyword>
<keyword id="KW-0816">Tricarboxylic acid cycle</keyword>
<evidence type="ECO:0000255" key="1">
    <source>
        <dbReference type="PROSITE-ProRule" id="PRU10119"/>
    </source>
</evidence>
<evidence type="ECO:0000269" key="2">
    <source>
    </source>
</evidence>
<evidence type="ECO:0000269" key="3">
    <source>
    </source>
</evidence>
<evidence type="ECO:0000305" key="4"/>
<accession>Q10663</accession>
<accession>O17353</accession>
<accession>Q8IA71</accession>
<reference key="1">
    <citation type="journal article" date="1995" name="Dev. Biol.">
        <title>Bifunctional glyoxylate cycle protein of Caenorhabditis elegans: a developmentally regulated protein of intestine and muscle.</title>
        <authorList>
            <person name="Liu F."/>
            <person name="Thatcher J.D."/>
            <person name="Barral J.M."/>
            <person name="Epstein H.F."/>
        </authorList>
    </citation>
    <scope>NUCLEOTIDE SEQUENCE [MRNA] (ISOFORM A)</scope>
    <scope>DEVELOPMENTAL STAGE</scope>
    <scope>PROTEIN SEQUENCE OF 429-461</scope>
    <source>
        <strain>Bristol N2</strain>
    </source>
</reference>
<reference key="2">
    <citation type="journal article" date="1998" name="Science">
        <title>Genome sequence of the nematode C. elegans: a platform for investigating biology.</title>
        <authorList>
            <consortium name="The C. elegans sequencing consortium"/>
        </authorList>
    </citation>
    <scope>NUCLEOTIDE SEQUENCE [LARGE SCALE GENOMIC DNA]</scope>
    <scope>ALTERNATIVE SPLICING</scope>
    <source>
        <strain>Bristol N2</strain>
    </source>
</reference>
<reference key="3">
    <citation type="journal article" date="2011" name="Mech. Ageing Dev.">
        <title>Increased longevity of some C. elegans mitochondrial mutants explained by activation of an alternative energy-producing pathway.</title>
        <authorList>
            <person name="Gallo M."/>
            <person name="Park D."/>
            <person name="Riddle D.L."/>
        </authorList>
    </citation>
    <scope>DEVELOPMENTAL STAGE</scope>
</reference>
<organism>
    <name type="scientific">Caenorhabditis elegans</name>
    <dbReference type="NCBI Taxonomy" id="6239"/>
    <lineage>
        <taxon>Eukaryota</taxon>
        <taxon>Metazoa</taxon>
        <taxon>Ecdysozoa</taxon>
        <taxon>Nematoda</taxon>
        <taxon>Chromadorea</taxon>
        <taxon>Rhabditida</taxon>
        <taxon>Rhabditina</taxon>
        <taxon>Rhabditomorpha</taxon>
        <taxon>Rhabditoidea</taxon>
        <taxon>Rhabditidae</taxon>
        <taxon>Peloderinae</taxon>
        <taxon>Caenorhabditis</taxon>
    </lineage>
</organism>
<feature type="chain" id="PRO_0000166874" description="Bifunctional glyoxylate cycle protein">
    <location>
        <begin position="1"/>
        <end position="968"/>
    </location>
</feature>
<feature type="region of interest" description="Isocitrate lyase">
    <location>
        <begin position="1"/>
        <end position="443"/>
    </location>
</feature>
<feature type="region of interest" description="Malate synthase">
    <location>
        <begin position="444"/>
        <end position="968"/>
    </location>
</feature>
<feature type="active site" description="Proton acceptor" evidence="1">
    <location>
        <position position="601"/>
    </location>
</feature>
<feature type="active site" description="Proton donor" evidence="1">
    <location>
        <position position="881"/>
    </location>
</feature>
<feature type="splice variant" id="VSP_056035" description="In isoform b." evidence="4">
    <original>YL</original>
    <variation>EP</variation>
    <location>
        <begin position="862"/>
        <end position="863"/>
    </location>
</feature>
<feature type="splice variant" id="VSP_056036" description="In isoform b." evidence="4">
    <location>
        <begin position="864"/>
        <end position="968"/>
    </location>
</feature>
<feature type="sequence conflict" description="In Ref. 1; AAA85857." evidence="4" ref="1">
    <original>D</original>
    <variation>H</variation>
    <location>
        <position position="152"/>
    </location>
</feature>
<feature type="sequence conflict" description="In Ref. 1; AAA85857." evidence="4" ref="1">
    <original>A</original>
    <variation>R</variation>
    <location>
        <position position="436"/>
    </location>
</feature>
<feature type="sequence conflict" description="In Ref. 1; AAA85857." evidence="4" ref="1">
    <original>R</original>
    <variation>A</variation>
    <location>
        <position position="463"/>
    </location>
</feature>
<feature type="sequence conflict" description="In Ref. 1; AAA85857." evidence="4" ref="1">
    <original>TDAYDRLVSEGY</original>
    <variation>DRRLRQACL</variation>
    <location>
        <begin position="957"/>
        <end position="968"/>
    </location>
</feature>
<proteinExistence type="evidence at protein level"/>
<name>GCP_CAEEL</name>
<dbReference type="EC" id="4.1.3.1"/>
<dbReference type="EC" id="2.3.3.9"/>
<dbReference type="EMBL" id="U23159">
    <property type="protein sequence ID" value="AAA85857.1"/>
    <property type="status" value="ALT_SEQ"/>
    <property type="molecule type" value="mRNA"/>
</dbReference>
<dbReference type="EMBL" id="FO080368">
    <property type="protein sequence ID" value="CCD63238.1"/>
    <property type="molecule type" value="Genomic_DNA"/>
</dbReference>
<dbReference type="EMBL" id="FO080368">
    <property type="protein sequence ID" value="CCD63239.1"/>
    <property type="molecule type" value="Genomic_DNA"/>
</dbReference>
<dbReference type="PIR" id="E88940">
    <property type="entry name" value="E88940"/>
</dbReference>
<dbReference type="RefSeq" id="NP_001021367.1">
    <molecule id="Q10663-2"/>
    <property type="nucleotide sequence ID" value="NM_001026196.7"/>
</dbReference>
<dbReference type="RefSeq" id="NP_503306.1">
    <molecule id="Q10663-1"/>
    <property type="nucleotide sequence ID" value="NM_070905.7"/>
</dbReference>
<dbReference type="SMR" id="Q10663"/>
<dbReference type="BioGRID" id="43657">
    <property type="interactions" value="21"/>
</dbReference>
<dbReference type="DIP" id="DIP-25113N"/>
<dbReference type="FunCoup" id="Q10663">
    <property type="interactions" value="326"/>
</dbReference>
<dbReference type="STRING" id="6239.C05E4.9a.2"/>
<dbReference type="iPTMnet" id="Q10663"/>
<dbReference type="PaxDb" id="6239-C05E4.9a"/>
<dbReference type="PeptideAtlas" id="Q10663"/>
<dbReference type="EnsemblMetazoa" id="C05E4.9a.1">
    <molecule id="Q10663-1"/>
    <property type="protein sequence ID" value="C05E4.9a.1"/>
    <property type="gene ID" value="WBGene00001564"/>
</dbReference>
<dbReference type="EnsemblMetazoa" id="C05E4.9b.1">
    <molecule id="Q10663-2"/>
    <property type="protein sequence ID" value="C05E4.9b.1"/>
    <property type="gene ID" value="WBGene00001564"/>
</dbReference>
<dbReference type="GeneID" id="178583"/>
<dbReference type="KEGG" id="cel:CELE_C05E4.9"/>
<dbReference type="UCSC" id="C05E4.9a">
    <property type="organism name" value="c. elegans"/>
</dbReference>
<dbReference type="AGR" id="WB:WBGene00001564"/>
<dbReference type="CTD" id="178583"/>
<dbReference type="WormBase" id="C05E4.9a">
    <molecule id="Q10663-1"/>
    <property type="protein sequence ID" value="CE23521"/>
    <property type="gene ID" value="WBGene00001564"/>
    <property type="gene designation" value="icl-1"/>
</dbReference>
<dbReference type="WormBase" id="C05E4.9b">
    <molecule id="Q10663-2"/>
    <property type="protein sequence ID" value="CE32565"/>
    <property type="gene ID" value="WBGene00001564"/>
    <property type="gene designation" value="icl-1"/>
</dbReference>
<dbReference type="eggNOG" id="KOG1260">
    <property type="taxonomic scope" value="Eukaryota"/>
</dbReference>
<dbReference type="eggNOG" id="KOG1261">
    <property type="taxonomic scope" value="Eukaryota"/>
</dbReference>
<dbReference type="GeneTree" id="ENSGT00940000174673"/>
<dbReference type="HOGENOM" id="CLU_012853_0_0_1"/>
<dbReference type="InParanoid" id="Q10663"/>
<dbReference type="OMA" id="IWMETSH"/>
<dbReference type="OrthoDB" id="4078635at2759"/>
<dbReference type="PhylomeDB" id="Q10663"/>
<dbReference type="UniPathway" id="UPA00703">
    <property type="reaction ID" value="UER00719"/>
</dbReference>
<dbReference type="UniPathway" id="UPA00703">
    <property type="reaction ID" value="UER00720"/>
</dbReference>
<dbReference type="PRO" id="PR:Q10663"/>
<dbReference type="Proteomes" id="UP000001940">
    <property type="component" value="Chromosome V"/>
</dbReference>
<dbReference type="Bgee" id="WBGene00001564">
    <property type="expression patterns" value="Expressed in larva and 4 other cell types or tissues"/>
</dbReference>
<dbReference type="GO" id="GO:0005739">
    <property type="term" value="C:mitochondrion"/>
    <property type="evidence" value="ECO:0007005"/>
    <property type="project" value="WormBase"/>
</dbReference>
<dbReference type="GO" id="GO:0004451">
    <property type="term" value="F:isocitrate lyase activity"/>
    <property type="evidence" value="ECO:0000250"/>
    <property type="project" value="WormBase"/>
</dbReference>
<dbReference type="GO" id="GO:0004474">
    <property type="term" value="F:malate synthase activity"/>
    <property type="evidence" value="ECO:0000250"/>
    <property type="project" value="WormBase"/>
</dbReference>
<dbReference type="GO" id="GO:0008340">
    <property type="term" value="P:determination of adult lifespan"/>
    <property type="evidence" value="ECO:0000316"/>
    <property type="project" value="WormBase"/>
</dbReference>
<dbReference type="GO" id="GO:0006097">
    <property type="term" value="P:glyoxylate cycle"/>
    <property type="evidence" value="ECO:0000250"/>
    <property type="project" value="WormBase"/>
</dbReference>
<dbReference type="GO" id="GO:0006099">
    <property type="term" value="P:tricarboxylic acid cycle"/>
    <property type="evidence" value="ECO:0007669"/>
    <property type="project" value="UniProtKB-KW"/>
</dbReference>
<dbReference type="CDD" id="cd00377">
    <property type="entry name" value="ICL_PEPM"/>
    <property type="match status" value="1"/>
</dbReference>
<dbReference type="CDD" id="cd00727">
    <property type="entry name" value="malate_synt_A"/>
    <property type="match status" value="1"/>
</dbReference>
<dbReference type="FunFam" id="3.20.20.60:FF:000005">
    <property type="entry name" value="Isocitrate lyase"/>
    <property type="match status" value="1"/>
</dbReference>
<dbReference type="FunFam" id="1.20.1220.12:FF:000001">
    <property type="entry name" value="Malate synthase"/>
    <property type="match status" value="1"/>
</dbReference>
<dbReference type="FunFam" id="3.20.20.360:FF:000001">
    <property type="entry name" value="Malate synthase"/>
    <property type="match status" value="1"/>
</dbReference>
<dbReference type="Gene3D" id="3.20.20.360">
    <property type="entry name" value="Malate synthase, domain 3"/>
    <property type="match status" value="1"/>
</dbReference>
<dbReference type="Gene3D" id="1.20.1220.12">
    <property type="entry name" value="Malate synthase, domain III"/>
    <property type="match status" value="1"/>
</dbReference>
<dbReference type="Gene3D" id="3.20.20.60">
    <property type="entry name" value="Phosphoenolpyruvate-binding domains"/>
    <property type="match status" value="1"/>
</dbReference>
<dbReference type="InterPro" id="IPR039556">
    <property type="entry name" value="ICL/PEPM"/>
</dbReference>
<dbReference type="InterPro" id="IPR006254">
    <property type="entry name" value="Isocitrate_lyase"/>
</dbReference>
<dbReference type="InterPro" id="IPR018523">
    <property type="entry name" value="Isocitrate_lyase_ph_CS"/>
</dbReference>
<dbReference type="InterPro" id="IPR044856">
    <property type="entry name" value="Malate_synth_C_sf"/>
</dbReference>
<dbReference type="InterPro" id="IPR011076">
    <property type="entry name" value="Malate_synth_sf"/>
</dbReference>
<dbReference type="InterPro" id="IPR006252">
    <property type="entry name" value="Malate_synthA"/>
</dbReference>
<dbReference type="InterPro" id="IPR019830">
    <property type="entry name" value="Malate_synthase_CS"/>
</dbReference>
<dbReference type="InterPro" id="IPR001465">
    <property type="entry name" value="Malate_synthase_TIM"/>
</dbReference>
<dbReference type="InterPro" id="IPR048355">
    <property type="entry name" value="MS_C"/>
</dbReference>
<dbReference type="InterPro" id="IPR048356">
    <property type="entry name" value="MS_N"/>
</dbReference>
<dbReference type="InterPro" id="IPR046363">
    <property type="entry name" value="MS_N_TIM-barrel_dom"/>
</dbReference>
<dbReference type="InterPro" id="IPR015813">
    <property type="entry name" value="Pyrv/PenolPyrv_kinase-like_dom"/>
</dbReference>
<dbReference type="InterPro" id="IPR040442">
    <property type="entry name" value="Pyrv_kinase-like_dom_sf"/>
</dbReference>
<dbReference type="NCBIfam" id="TIGR01346">
    <property type="entry name" value="isocit_lyase"/>
    <property type="match status" value="1"/>
</dbReference>
<dbReference type="NCBIfam" id="TIGR01344">
    <property type="entry name" value="malate_syn_A"/>
    <property type="match status" value="1"/>
</dbReference>
<dbReference type="NCBIfam" id="NF011645">
    <property type="entry name" value="PRK15063.1"/>
    <property type="match status" value="1"/>
</dbReference>
<dbReference type="PANTHER" id="PTHR21631:SF3">
    <property type="entry name" value="BIFUNCTIONAL GLYOXYLATE CYCLE PROTEIN"/>
    <property type="match status" value="1"/>
</dbReference>
<dbReference type="PANTHER" id="PTHR21631">
    <property type="entry name" value="ISOCITRATE LYASE/MALATE SYNTHASE"/>
    <property type="match status" value="1"/>
</dbReference>
<dbReference type="Pfam" id="PF00463">
    <property type="entry name" value="ICL"/>
    <property type="match status" value="1"/>
</dbReference>
<dbReference type="Pfam" id="PF20659">
    <property type="entry name" value="MS_C"/>
    <property type="match status" value="1"/>
</dbReference>
<dbReference type="Pfam" id="PF20656">
    <property type="entry name" value="MS_N"/>
    <property type="match status" value="1"/>
</dbReference>
<dbReference type="Pfam" id="PF01274">
    <property type="entry name" value="MS_TIM-barrel"/>
    <property type="match status" value="1"/>
</dbReference>
<dbReference type="Pfam" id="PF13714">
    <property type="entry name" value="PEP_mutase"/>
    <property type="match status" value="1"/>
</dbReference>
<dbReference type="SUPFAM" id="SSF51645">
    <property type="entry name" value="Malate synthase G"/>
    <property type="match status" value="1"/>
</dbReference>
<dbReference type="SUPFAM" id="SSF51621">
    <property type="entry name" value="Phosphoenolpyruvate/pyruvate domain"/>
    <property type="match status" value="1"/>
</dbReference>
<dbReference type="PROSITE" id="PS00161">
    <property type="entry name" value="ISOCITRATE_LYASE"/>
    <property type="match status" value="1"/>
</dbReference>
<dbReference type="PROSITE" id="PS00510">
    <property type="entry name" value="MALATE_SYNTHASE"/>
    <property type="match status" value="1"/>
</dbReference>
<protein>
    <recommendedName>
        <fullName>Bifunctional glyoxylate cycle protein</fullName>
    </recommendedName>
    <alternativeName>
        <fullName>Gex-3-interacting protein 7</fullName>
    </alternativeName>
    <domain>
        <recommendedName>
            <fullName>Isocitrate lyase</fullName>
            <shortName>ICL</shortName>
            <shortName>Isocitrase</shortName>
            <shortName>Isocitratase</shortName>
            <ecNumber>4.1.3.1</ecNumber>
        </recommendedName>
    </domain>
    <domain>
        <recommendedName>
            <fullName>Malate synthase</fullName>
            <ecNumber>2.3.3.9</ecNumber>
        </recommendedName>
    </domain>
</protein>
<gene>
    <name type="primary">icl-1</name>
    <name type="synonym">gei-7</name>
    <name type="ORF">C05E4.9</name>
</gene>